<organism>
    <name type="scientific">Oceanobacillus iheyensis (strain DSM 14371 / CIP 107618 / JCM 11309 / KCTC 3954 / HTE831)</name>
    <dbReference type="NCBI Taxonomy" id="221109"/>
    <lineage>
        <taxon>Bacteria</taxon>
        <taxon>Bacillati</taxon>
        <taxon>Bacillota</taxon>
        <taxon>Bacilli</taxon>
        <taxon>Bacillales</taxon>
        <taxon>Bacillaceae</taxon>
        <taxon>Oceanobacillus</taxon>
    </lineage>
</organism>
<protein>
    <recommendedName>
        <fullName evidence="1">Putative regulatory protein OB1501</fullName>
    </recommendedName>
</protein>
<proteinExistence type="inferred from homology"/>
<name>Y1501_OCEIH</name>
<feature type="chain" id="PRO_0000050234" description="Putative regulatory protein OB1501">
    <location>
        <begin position="1"/>
        <end position="86"/>
    </location>
</feature>
<reference key="1">
    <citation type="journal article" date="2002" name="Nucleic Acids Res.">
        <title>Genome sequence of Oceanobacillus iheyensis isolated from the Iheya Ridge and its unexpected adaptive capabilities to extreme environments.</title>
        <authorList>
            <person name="Takami H."/>
            <person name="Takaki Y."/>
            <person name="Uchiyama I."/>
        </authorList>
    </citation>
    <scope>NUCLEOTIDE SEQUENCE [LARGE SCALE GENOMIC DNA]</scope>
    <source>
        <strain>DSM 14371 / CIP 107618 / JCM 11309 / KCTC 3954 / HTE831</strain>
    </source>
</reference>
<accession>Q8ER29</accession>
<sequence length="86" mass="9345">MNLSLINIGFGNVVSANRIISIVSPESAPIKRIITVARDNNKLVDATYGRRTRAVIITDSDHVVLSAVQPETVGQRVISNDEISDE</sequence>
<gene>
    <name type="ordered locus">OB1501</name>
</gene>
<evidence type="ECO:0000255" key="1">
    <source>
        <dbReference type="HAMAP-Rule" id="MF_01503"/>
    </source>
</evidence>
<keyword id="KW-1185">Reference proteome</keyword>
<comment type="similarity">
    <text evidence="1">Belongs to the RemA family.</text>
</comment>
<dbReference type="EMBL" id="BA000028">
    <property type="protein sequence ID" value="BAC13457.1"/>
    <property type="molecule type" value="Genomic_DNA"/>
</dbReference>
<dbReference type="RefSeq" id="WP_011065902.1">
    <property type="nucleotide sequence ID" value="NC_004193.1"/>
</dbReference>
<dbReference type="SMR" id="Q8ER29"/>
<dbReference type="STRING" id="221109.gene:10733741"/>
<dbReference type="KEGG" id="oih:OB1501"/>
<dbReference type="eggNOG" id="COG2052">
    <property type="taxonomic scope" value="Bacteria"/>
</dbReference>
<dbReference type="HOGENOM" id="CLU_165326_0_0_9"/>
<dbReference type="OrthoDB" id="5432174at2"/>
<dbReference type="PhylomeDB" id="Q8ER29"/>
<dbReference type="Proteomes" id="UP000000822">
    <property type="component" value="Chromosome"/>
</dbReference>
<dbReference type="HAMAP" id="MF_01503">
    <property type="entry name" value="RemA"/>
    <property type="match status" value="1"/>
</dbReference>
<dbReference type="InterPro" id="IPR007169">
    <property type="entry name" value="RemA-like"/>
</dbReference>
<dbReference type="NCBIfam" id="NF046064">
    <property type="entry name" value="MtxBflmRegRemA"/>
    <property type="match status" value="1"/>
</dbReference>
<dbReference type="NCBIfam" id="NF003315">
    <property type="entry name" value="PRK04323.1"/>
    <property type="match status" value="1"/>
</dbReference>
<dbReference type="PANTHER" id="PTHR38449:SF1">
    <property type="entry name" value="REGULATORY PROTEIN SSL2874-RELATED"/>
    <property type="match status" value="1"/>
</dbReference>
<dbReference type="PANTHER" id="PTHR38449">
    <property type="entry name" value="REGULATORY PROTEIN TM_1690-RELATED"/>
    <property type="match status" value="1"/>
</dbReference>
<dbReference type="Pfam" id="PF04025">
    <property type="entry name" value="RemA-like"/>
    <property type="match status" value="1"/>
</dbReference>